<proteinExistence type="evidence at protein level"/>
<dbReference type="EMBL" id="AF019225">
    <property type="protein sequence ID" value="AAB81218.2"/>
    <property type="status" value="ALT_INIT"/>
    <property type="molecule type" value="mRNA"/>
</dbReference>
<dbReference type="EMBL" id="AF323540">
    <property type="protein sequence ID" value="AAG53690.1"/>
    <property type="molecule type" value="mRNA"/>
</dbReference>
<dbReference type="EMBL" id="AF323548">
    <property type="protein sequence ID" value="AAK11591.1"/>
    <property type="molecule type" value="Genomic_DNA"/>
</dbReference>
<dbReference type="EMBL" id="AF323543">
    <property type="protein sequence ID" value="AAK11591.1"/>
    <property type="status" value="JOINED"/>
    <property type="molecule type" value="Genomic_DNA"/>
</dbReference>
<dbReference type="EMBL" id="AF323544">
    <property type="protein sequence ID" value="AAK11591.1"/>
    <property type="status" value="JOINED"/>
    <property type="molecule type" value="Genomic_DNA"/>
</dbReference>
<dbReference type="EMBL" id="AF323545">
    <property type="protein sequence ID" value="AAK11591.1"/>
    <property type="status" value="JOINED"/>
    <property type="molecule type" value="Genomic_DNA"/>
</dbReference>
<dbReference type="EMBL" id="AF323546">
    <property type="protein sequence ID" value="AAK11591.1"/>
    <property type="status" value="JOINED"/>
    <property type="molecule type" value="Genomic_DNA"/>
</dbReference>
<dbReference type="EMBL" id="AF323547">
    <property type="protein sequence ID" value="AAK11591.1"/>
    <property type="status" value="JOINED"/>
    <property type="molecule type" value="Genomic_DNA"/>
</dbReference>
<dbReference type="EMBL" id="AF305224">
    <property type="protein sequence ID" value="AAK20210.1"/>
    <property type="molecule type" value="mRNA"/>
</dbReference>
<dbReference type="EMBL" id="AF305428">
    <property type="protein sequence ID" value="AAL09358.1"/>
    <property type="molecule type" value="mRNA"/>
</dbReference>
<dbReference type="EMBL" id="AK300454">
    <property type="protein sequence ID" value="BAG62174.1"/>
    <property type="molecule type" value="mRNA"/>
</dbReference>
<dbReference type="EMBL" id="Z82215">
    <property type="status" value="NOT_ANNOTATED_CDS"/>
    <property type="molecule type" value="Genomic_DNA"/>
</dbReference>
<dbReference type="EMBL" id="BC143039">
    <property type="protein sequence ID" value="AAI43040.1"/>
    <property type="molecule type" value="mRNA"/>
</dbReference>
<dbReference type="CCDS" id="CCDS13925.1">
    <molecule id="O14791-2"/>
</dbReference>
<dbReference type="CCDS" id="CCDS13926.1">
    <molecule id="O14791-1"/>
</dbReference>
<dbReference type="CCDS" id="CCDS46702.1">
    <molecule id="O14791-3"/>
</dbReference>
<dbReference type="RefSeq" id="NP_001130012.1">
    <molecule id="O14791-1"/>
    <property type="nucleotide sequence ID" value="NM_001136540.2"/>
</dbReference>
<dbReference type="RefSeq" id="NP_001130013.1">
    <molecule id="O14791-3"/>
    <property type="nucleotide sequence ID" value="NM_001136541.2"/>
</dbReference>
<dbReference type="RefSeq" id="NP_001349856.1">
    <molecule id="O14791-3"/>
    <property type="nucleotide sequence ID" value="NM_001362927.2"/>
</dbReference>
<dbReference type="RefSeq" id="NP_003652.2">
    <molecule id="O14791-1"/>
    <property type="nucleotide sequence ID" value="NM_003661.3"/>
</dbReference>
<dbReference type="RefSeq" id="NP_663318.1">
    <molecule id="O14791-2"/>
    <property type="nucleotide sequence ID" value="NM_145343.3"/>
</dbReference>
<dbReference type="RefSeq" id="XP_005261853.1">
    <property type="nucleotide sequence ID" value="XM_005261796.3"/>
</dbReference>
<dbReference type="PDB" id="7L6K">
    <property type="method" value="NMR"/>
    <property type="chains" value="A=61-172"/>
</dbReference>
<dbReference type="PDB" id="7LF7">
    <property type="method" value="X-ray"/>
    <property type="resolution" value="2.03 A"/>
    <property type="chains" value="K/M=61-172"/>
</dbReference>
<dbReference type="PDB" id="7LFA">
    <property type="method" value="X-ray"/>
    <property type="resolution" value="1.86 A"/>
    <property type="chains" value="A/C=61-172"/>
</dbReference>
<dbReference type="PDB" id="7LFB">
    <property type="method" value="X-ray"/>
    <property type="resolution" value="1.91 A"/>
    <property type="chains" value="X=61-172"/>
</dbReference>
<dbReference type="PDB" id="7LFD">
    <property type="method" value="X-ray"/>
    <property type="resolution" value="2.16 A"/>
    <property type="chains" value="A=152-168"/>
</dbReference>
<dbReference type="PDBsum" id="7L6K"/>
<dbReference type="PDBsum" id="7LF7"/>
<dbReference type="PDBsum" id="7LFA"/>
<dbReference type="PDBsum" id="7LFB"/>
<dbReference type="PDBsum" id="7LFD"/>
<dbReference type="SMR" id="O14791"/>
<dbReference type="BioGRID" id="114112">
    <property type="interactions" value="4"/>
</dbReference>
<dbReference type="CORUM" id="O14791"/>
<dbReference type="FunCoup" id="O14791">
    <property type="interactions" value="40"/>
</dbReference>
<dbReference type="IntAct" id="O14791">
    <property type="interactions" value="5"/>
</dbReference>
<dbReference type="STRING" id="9606.ENSP00000317674"/>
<dbReference type="BindingDB" id="O14791"/>
<dbReference type="ChEMBL" id="CHEMBL4680021"/>
<dbReference type="DrugBank" id="DB11886">
    <property type="generic name" value="Infigratinib"/>
</dbReference>
<dbReference type="DrugBank" id="DB00877">
    <property type="generic name" value="Sirolimus"/>
</dbReference>
<dbReference type="DrugBank" id="DB00460">
    <property type="generic name" value="Verteporfin"/>
</dbReference>
<dbReference type="DrugBank" id="DB01593">
    <property type="generic name" value="Zinc"/>
</dbReference>
<dbReference type="DrugBank" id="DB14487">
    <property type="generic name" value="Zinc acetate"/>
</dbReference>
<dbReference type="DrugBank" id="DB14533">
    <property type="generic name" value="Zinc chloride"/>
</dbReference>
<dbReference type="DrugBank" id="DB14548">
    <property type="generic name" value="Zinc sulfate, unspecified form"/>
</dbReference>
<dbReference type="TCDB" id="1.C.127.1.1">
    <property type="family name" value="the pore-forming trypanolytic apolipoprotein a1 factor (apol1) family"/>
</dbReference>
<dbReference type="GlyCosmos" id="O14791">
    <property type="glycosylation" value="2 sites, 2 glycans"/>
</dbReference>
<dbReference type="GlyGen" id="O14791">
    <property type="glycosylation" value="4 sites, 3 O-linked glycans (3 sites)"/>
</dbReference>
<dbReference type="iPTMnet" id="O14791"/>
<dbReference type="PhosphoSitePlus" id="O14791"/>
<dbReference type="BioMuta" id="APOL1"/>
<dbReference type="CPTAC" id="non-CPTAC-2628"/>
<dbReference type="jPOST" id="O14791"/>
<dbReference type="MassIVE" id="O14791"/>
<dbReference type="PaxDb" id="9606-ENSP00000317674"/>
<dbReference type="PeptideAtlas" id="O14791"/>
<dbReference type="ProteomicsDB" id="20010"/>
<dbReference type="ProteomicsDB" id="48240">
    <molecule id="O14791-1"/>
</dbReference>
<dbReference type="ProteomicsDB" id="48241">
    <molecule id="O14791-2"/>
</dbReference>
<dbReference type="Pumba" id="O14791"/>
<dbReference type="Antibodypedia" id="875">
    <property type="antibodies" value="460 antibodies from 35 providers"/>
</dbReference>
<dbReference type="DNASU" id="8542"/>
<dbReference type="Ensembl" id="ENST00000319136.8">
    <molecule id="O14791-2"/>
    <property type="protein sequence ID" value="ENSP00000317674.4"/>
    <property type="gene ID" value="ENSG00000100342.22"/>
</dbReference>
<dbReference type="Ensembl" id="ENST00000397278.8">
    <molecule id="O14791-1"/>
    <property type="protein sequence ID" value="ENSP00000380448.4"/>
    <property type="gene ID" value="ENSG00000100342.22"/>
</dbReference>
<dbReference type="Ensembl" id="ENST00000426053.5">
    <molecule id="O14791-3"/>
    <property type="protein sequence ID" value="ENSP00000388477.1"/>
    <property type="gene ID" value="ENSG00000100342.22"/>
</dbReference>
<dbReference type="Ensembl" id="ENST00000427990.6">
    <molecule id="O14791-1"/>
    <property type="protein sequence ID" value="ENSP00000391302.2"/>
    <property type="gene ID" value="ENSG00000100342.22"/>
</dbReference>
<dbReference type="GeneID" id="8542"/>
<dbReference type="KEGG" id="hsa:8542"/>
<dbReference type="MANE-Select" id="ENST00000397278.8">
    <property type="protein sequence ID" value="ENSP00000380448.4"/>
    <property type="RefSeq nucleotide sequence ID" value="NM_003661.4"/>
    <property type="RefSeq protein sequence ID" value="NP_003652.2"/>
</dbReference>
<dbReference type="UCSC" id="uc003ape.4">
    <molecule id="O14791-1"/>
    <property type="organism name" value="human"/>
</dbReference>
<dbReference type="AGR" id="HGNC:618"/>
<dbReference type="CTD" id="8542"/>
<dbReference type="DisGeNET" id="8542"/>
<dbReference type="GeneCards" id="APOL1"/>
<dbReference type="HGNC" id="HGNC:618">
    <property type="gene designation" value="APOL1"/>
</dbReference>
<dbReference type="HPA" id="ENSG00000100342">
    <property type="expression patterns" value="Tissue enhanced (liver)"/>
</dbReference>
<dbReference type="MalaCards" id="APOL1"/>
<dbReference type="MIM" id="603743">
    <property type="type" value="gene"/>
</dbReference>
<dbReference type="MIM" id="612551">
    <property type="type" value="phenotype"/>
</dbReference>
<dbReference type="neXtProt" id="NX_O14791"/>
<dbReference type="OpenTargets" id="ENSG00000100342"/>
<dbReference type="Orphanet" id="656">
    <property type="disease" value="Hereditary steroid-resistant nephrotic syndrome"/>
</dbReference>
<dbReference type="PharmGKB" id="PA24904"/>
<dbReference type="VEuPathDB" id="HostDB:ENSG00000100342"/>
<dbReference type="eggNOG" id="ENOG502RZGU">
    <property type="taxonomic scope" value="Eukaryota"/>
</dbReference>
<dbReference type="GeneTree" id="ENSGT01030000234599"/>
<dbReference type="HOGENOM" id="CLU_046288_1_0_1"/>
<dbReference type="InParanoid" id="O14791"/>
<dbReference type="OrthoDB" id="6363454at2759"/>
<dbReference type="PAN-GO" id="O14791">
    <property type="GO annotations" value="1 GO annotation based on evolutionary models"/>
</dbReference>
<dbReference type="PhylomeDB" id="O14791"/>
<dbReference type="TreeFam" id="TF334681"/>
<dbReference type="PathwayCommons" id="O14791"/>
<dbReference type="Reactome" id="R-HSA-2168880">
    <property type="pathway name" value="Scavenging of heme from plasma"/>
</dbReference>
<dbReference type="Reactome" id="R-HSA-381426">
    <property type="pathway name" value="Regulation of Insulin-like Growth Factor (IGF) transport and uptake by Insulin-like Growth Factor Binding Proteins (IGFBPs)"/>
</dbReference>
<dbReference type="Reactome" id="R-HSA-8957275">
    <property type="pathway name" value="Post-translational protein phosphorylation"/>
</dbReference>
<dbReference type="SignaLink" id="O14791"/>
<dbReference type="BioGRID-ORCS" id="8542">
    <property type="hits" value="13 hits in 1164 CRISPR screens"/>
</dbReference>
<dbReference type="ChiTaRS" id="APOL1">
    <property type="organism name" value="human"/>
</dbReference>
<dbReference type="GeneWiki" id="APOL1"/>
<dbReference type="GenomeRNAi" id="8542"/>
<dbReference type="Pharos" id="O14791">
    <property type="development level" value="Tbio"/>
</dbReference>
<dbReference type="PRO" id="PR:O14791"/>
<dbReference type="Proteomes" id="UP000005640">
    <property type="component" value="Chromosome 22"/>
</dbReference>
<dbReference type="RNAct" id="O14791">
    <property type="molecule type" value="protein"/>
</dbReference>
<dbReference type="Bgee" id="ENSG00000100342">
    <property type="expression patterns" value="Expressed in gall bladder and 179 other cell types or tissues"/>
</dbReference>
<dbReference type="ExpressionAtlas" id="O14791">
    <property type="expression patterns" value="baseline and differential"/>
</dbReference>
<dbReference type="GO" id="GO:0072562">
    <property type="term" value="C:blood microparticle"/>
    <property type="evidence" value="ECO:0007005"/>
    <property type="project" value="UniProtKB"/>
</dbReference>
<dbReference type="GO" id="GO:0005788">
    <property type="term" value="C:endoplasmic reticulum lumen"/>
    <property type="evidence" value="ECO:0000304"/>
    <property type="project" value="Reactome"/>
</dbReference>
<dbReference type="GO" id="GO:0005576">
    <property type="term" value="C:extracellular region"/>
    <property type="evidence" value="ECO:0000304"/>
    <property type="project" value="Reactome"/>
</dbReference>
<dbReference type="GO" id="GO:0005615">
    <property type="term" value="C:extracellular space"/>
    <property type="evidence" value="ECO:0000314"/>
    <property type="project" value="BHF-UCL"/>
</dbReference>
<dbReference type="GO" id="GO:0034364">
    <property type="term" value="C:high-density lipoprotein particle"/>
    <property type="evidence" value="ECO:0000314"/>
    <property type="project" value="BHF-UCL"/>
</dbReference>
<dbReference type="GO" id="GO:0016020">
    <property type="term" value="C:membrane"/>
    <property type="evidence" value="ECO:0000305"/>
    <property type="project" value="BHF-UCL"/>
</dbReference>
<dbReference type="GO" id="GO:0034361">
    <property type="term" value="C:very-low-density lipoprotein particle"/>
    <property type="evidence" value="ECO:0000314"/>
    <property type="project" value="BHF-UCL"/>
</dbReference>
<dbReference type="GO" id="GO:0005254">
    <property type="term" value="F:chloride channel activity"/>
    <property type="evidence" value="ECO:0000314"/>
    <property type="project" value="BHF-UCL"/>
</dbReference>
<dbReference type="GO" id="GO:0008289">
    <property type="term" value="F:lipid binding"/>
    <property type="evidence" value="ECO:0000314"/>
    <property type="project" value="BHF-UCL"/>
</dbReference>
<dbReference type="GO" id="GO:1902476">
    <property type="term" value="P:chloride transmembrane transport"/>
    <property type="evidence" value="ECO:0000314"/>
    <property type="project" value="BHF-UCL"/>
</dbReference>
<dbReference type="GO" id="GO:0008203">
    <property type="term" value="P:cholesterol metabolic process"/>
    <property type="evidence" value="ECO:0007669"/>
    <property type="project" value="UniProtKB-KW"/>
</dbReference>
<dbReference type="GO" id="GO:0051838">
    <property type="term" value="P:cytolysis by host of symbiont cells"/>
    <property type="evidence" value="ECO:0000314"/>
    <property type="project" value="BHF-UCL"/>
</dbReference>
<dbReference type="GO" id="GO:0045087">
    <property type="term" value="P:innate immune response"/>
    <property type="evidence" value="ECO:0000314"/>
    <property type="project" value="BHF-UCL"/>
</dbReference>
<dbReference type="GO" id="GO:0006869">
    <property type="term" value="P:lipid transport"/>
    <property type="evidence" value="ECO:0007669"/>
    <property type="project" value="UniProtKB-KW"/>
</dbReference>
<dbReference type="GO" id="GO:0042157">
    <property type="term" value="P:lipoprotein metabolic process"/>
    <property type="evidence" value="ECO:0007669"/>
    <property type="project" value="InterPro"/>
</dbReference>
<dbReference type="InterPro" id="IPR008405">
    <property type="entry name" value="ApoL"/>
</dbReference>
<dbReference type="PANTHER" id="PTHR14096">
    <property type="entry name" value="APOLIPOPROTEIN L"/>
    <property type="match status" value="1"/>
</dbReference>
<dbReference type="PANTHER" id="PTHR14096:SF55">
    <property type="entry name" value="APOLIPOPROTEIN L1"/>
    <property type="match status" value="1"/>
</dbReference>
<dbReference type="Pfam" id="PF05461">
    <property type="entry name" value="ApoL"/>
    <property type="match status" value="1"/>
</dbReference>
<sequence>MEGAALLRVSVLCIWMSALFLGVGVRAEEAGARVQQNVPSGTDTGDPQSKPLGDWAAGTMDPESSIFIEDAIKYFKEKVSTQNLLLLLTDNEAWNGFVAAAELPRNEADELRKALDNLARQMIMKDKNWHDKGQQYRNWFLKEFPRLKSELEDNIRRLRALADGVQKVHKGTTIANVVSGSLSISSGILTLVGMGLAPFTEGGSLVLLEPGMELGITAALTGITSSTMDYGKKWWTQAQAHDLVIKSLDKLKEVREFLGENISNFLSLAGNTYQLTRGIGKDIRALRRARANLQSVPHASASRPRVTEPISAESGEQVERVNEPSILEMSRGVKLTDVAPVSFFLVLDVVYLVYESKHLHEGAKSETAEELKKVAQELEEKLNILNNNYKILQADQEL</sequence>
<reference key="1">
    <citation type="journal article" date="1997" name="J. Biol. Chem.">
        <title>Apolipoprotein L, a new human high density lipoprotein apolipoprotein expressed by the pancreas. Identification, cloning, characterization, and plasma distribution of apolipoprotein L.</title>
        <authorList>
            <person name="Duchateau P.N."/>
            <person name="Pullinger C.R."/>
            <person name="Orellana R.E."/>
            <person name="Kunitake S.T."/>
            <person name="Naya-Vigne J."/>
            <person name="O'Connor P.M."/>
            <person name="Malloy M.J."/>
            <person name="Kane J.P."/>
        </authorList>
    </citation>
    <scope>NUCLEOTIDE SEQUENCE [MRNA] (ISOFORM 1)</scope>
    <scope>PROTEIN SEQUENCE OF 28-63</scope>
    <scope>VARIANTS LYS-150; ILE-228 AND LYS-255</scope>
    <source>
        <tissue>Pancreas</tissue>
    </source>
</reference>
<reference key="2">
    <citation type="journal article" date="2001" name="J. Lipid Res.">
        <title>Apolipoprotein L gene family: tissue-specific expression, splicing, promoter regions; discovery of a new gene.</title>
        <authorList>
            <person name="Duchateau P.N."/>
            <person name="Pullinger C.R."/>
            <person name="Cho M.H."/>
            <person name="Eng C."/>
            <person name="Kane J.P."/>
        </authorList>
    </citation>
    <scope>NUCLEOTIDE SEQUENCE [GENOMIC DNA]</scope>
    <scope>NUCLEOTIDE SEQUENCE [MRNA] (ISOFORM 2)</scope>
    <scope>SEQUENCE REVISION TO 155 AND 346</scope>
    <scope>VARIANTS LYS-150; ILE-228 AND LYS-255</scope>
    <source>
        <tissue>Pancreas</tissue>
    </source>
</reference>
<reference key="3">
    <citation type="journal article" date="2001" name="Genomics">
        <title>The human apolipoprotein L gene cluster: identification, classification, and sites of distribution.</title>
        <authorList>
            <person name="Page N.M."/>
            <person name="Butlin D.J."/>
            <person name="Lomthaisong K."/>
            <person name="Lowry P.J."/>
        </authorList>
    </citation>
    <scope>NUCLEOTIDE SEQUENCE [MRNA] (ISOFORM 1)</scope>
    <source>
        <tissue>Placenta</tissue>
    </source>
</reference>
<reference key="4">
    <citation type="journal article" date="2002" name="Genomics">
        <title>The apolipoprotein L gene cluster has emerged recently in evolution and is expressed in human vascular tissue.</title>
        <authorList>
            <person name="Monajemi H."/>
            <person name="Fontijn R.D."/>
            <person name="Pannekoek H."/>
            <person name="Horrevoets A.J.G."/>
        </authorList>
    </citation>
    <scope>NUCLEOTIDE SEQUENCE [MRNA] (ISOFORM 1)</scope>
    <scope>VARIANTS ILE-228; LYS-255; GLY-342 AND MET-384</scope>
</reference>
<reference key="5">
    <citation type="journal article" date="2004" name="Nat. Genet.">
        <title>Complete sequencing and characterization of 21,243 full-length human cDNAs.</title>
        <authorList>
            <person name="Ota T."/>
            <person name="Suzuki Y."/>
            <person name="Nishikawa T."/>
            <person name="Otsuki T."/>
            <person name="Sugiyama T."/>
            <person name="Irie R."/>
            <person name="Wakamatsu A."/>
            <person name="Hayashi K."/>
            <person name="Sato H."/>
            <person name="Nagai K."/>
            <person name="Kimura K."/>
            <person name="Makita H."/>
            <person name="Sekine M."/>
            <person name="Obayashi M."/>
            <person name="Nishi T."/>
            <person name="Shibahara T."/>
            <person name="Tanaka T."/>
            <person name="Ishii S."/>
            <person name="Yamamoto J."/>
            <person name="Saito K."/>
            <person name="Kawai Y."/>
            <person name="Isono Y."/>
            <person name="Nakamura Y."/>
            <person name="Nagahari K."/>
            <person name="Murakami K."/>
            <person name="Yasuda T."/>
            <person name="Iwayanagi T."/>
            <person name="Wagatsuma M."/>
            <person name="Shiratori A."/>
            <person name="Sudo H."/>
            <person name="Hosoiri T."/>
            <person name="Kaku Y."/>
            <person name="Kodaira H."/>
            <person name="Kondo H."/>
            <person name="Sugawara M."/>
            <person name="Takahashi M."/>
            <person name="Kanda K."/>
            <person name="Yokoi T."/>
            <person name="Furuya T."/>
            <person name="Kikkawa E."/>
            <person name="Omura Y."/>
            <person name="Abe K."/>
            <person name="Kamihara K."/>
            <person name="Katsuta N."/>
            <person name="Sato K."/>
            <person name="Tanikawa M."/>
            <person name="Yamazaki M."/>
            <person name="Ninomiya K."/>
            <person name="Ishibashi T."/>
            <person name="Yamashita H."/>
            <person name="Murakawa K."/>
            <person name="Fujimori K."/>
            <person name="Tanai H."/>
            <person name="Kimata M."/>
            <person name="Watanabe M."/>
            <person name="Hiraoka S."/>
            <person name="Chiba Y."/>
            <person name="Ishida S."/>
            <person name="Ono Y."/>
            <person name="Takiguchi S."/>
            <person name="Watanabe S."/>
            <person name="Yosida M."/>
            <person name="Hotuta T."/>
            <person name="Kusano J."/>
            <person name="Kanehori K."/>
            <person name="Takahashi-Fujii A."/>
            <person name="Hara H."/>
            <person name="Tanase T.-O."/>
            <person name="Nomura Y."/>
            <person name="Togiya S."/>
            <person name="Komai F."/>
            <person name="Hara R."/>
            <person name="Takeuchi K."/>
            <person name="Arita M."/>
            <person name="Imose N."/>
            <person name="Musashino K."/>
            <person name="Yuuki H."/>
            <person name="Oshima A."/>
            <person name="Sasaki N."/>
            <person name="Aotsuka S."/>
            <person name="Yoshikawa Y."/>
            <person name="Matsunawa H."/>
            <person name="Ichihara T."/>
            <person name="Shiohata N."/>
            <person name="Sano S."/>
            <person name="Moriya S."/>
            <person name="Momiyama H."/>
            <person name="Satoh N."/>
            <person name="Takami S."/>
            <person name="Terashima Y."/>
            <person name="Suzuki O."/>
            <person name="Nakagawa S."/>
            <person name="Senoh A."/>
            <person name="Mizoguchi H."/>
            <person name="Goto Y."/>
            <person name="Shimizu F."/>
            <person name="Wakebe H."/>
            <person name="Hishigaki H."/>
            <person name="Watanabe T."/>
            <person name="Sugiyama A."/>
            <person name="Takemoto M."/>
            <person name="Kawakami B."/>
            <person name="Yamazaki M."/>
            <person name="Watanabe K."/>
            <person name="Kumagai A."/>
            <person name="Itakura S."/>
            <person name="Fukuzumi Y."/>
            <person name="Fujimori Y."/>
            <person name="Komiyama M."/>
            <person name="Tashiro H."/>
            <person name="Tanigami A."/>
            <person name="Fujiwara T."/>
            <person name="Ono T."/>
            <person name="Yamada K."/>
            <person name="Fujii Y."/>
            <person name="Ozaki K."/>
            <person name="Hirao M."/>
            <person name="Ohmori Y."/>
            <person name="Kawabata A."/>
            <person name="Hikiji T."/>
            <person name="Kobatake N."/>
            <person name="Inagaki H."/>
            <person name="Ikema Y."/>
            <person name="Okamoto S."/>
            <person name="Okitani R."/>
            <person name="Kawakami T."/>
            <person name="Noguchi S."/>
            <person name="Itoh T."/>
            <person name="Shigeta K."/>
            <person name="Senba T."/>
            <person name="Matsumura K."/>
            <person name="Nakajima Y."/>
            <person name="Mizuno T."/>
            <person name="Morinaga M."/>
            <person name="Sasaki M."/>
            <person name="Togashi T."/>
            <person name="Oyama M."/>
            <person name="Hata H."/>
            <person name="Watanabe M."/>
            <person name="Komatsu T."/>
            <person name="Mizushima-Sugano J."/>
            <person name="Satoh T."/>
            <person name="Shirai Y."/>
            <person name="Takahashi Y."/>
            <person name="Nakagawa K."/>
            <person name="Okumura K."/>
            <person name="Nagase T."/>
            <person name="Nomura N."/>
            <person name="Kikuchi H."/>
            <person name="Masuho Y."/>
            <person name="Yamashita R."/>
            <person name="Nakai K."/>
            <person name="Yada T."/>
            <person name="Nakamura Y."/>
            <person name="Ohara O."/>
            <person name="Isogai T."/>
            <person name="Sugano S."/>
        </authorList>
    </citation>
    <scope>NUCLEOTIDE SEQUENCE [LARGE SCALE MRNA] (ISOFORM 3)</scope>
    <scope>VARIANTS LYS-150; ILE-228 AND LYS-255</scope>
    <source>
        <tissue>Placenta</tissue>
    </source>
</reference>
<reference key="6">
    <citation type="journal article" date="1999" name="Nature">
        <title>The DNA sequence of human chromosome 22.</title>
        <authorList>
            <person name="Dunham I."/>
            <person name="Hunt A.R."/>
            <person name="Collins J.E."/>
            <person name="Bruskiewich R."/>
            <person name="Beare D.M."/>
            <person name="Clamp M."/>
            <person name="Smink L.J."/>
            <person name="Ainscough R."/>
            <person name="Almeida J.P."/>
            <person name="Babbage A.K."/>
            <person name="Bagguley C."/>
            <person name="Bailey J."/>
            <person name="Barlow K.F."/>
            <person name="Bates K.N."/>
            <person name="Beasley O.P."/>
            <person name="Bird C.P."/>
            <person name="Blakey S.E."/>
            <person name="Bridgeman A.M."/>
            <person name="Buck D."/>
            <person name="Burgess J."/>
            <person name="Burrill W.D."/>
            <person name="Burton J."/>
            <person name="Carder C."/>
            <person name="Carter N.P."/>
            <person name="Chen Y."/>
            <person name="Clark G."/>
            <person name="Clegg S.M."/>
            <person name="Cobley V.E."/>
            <person name="Cole C.G."/>
            <person name="Collier R.E."/>
            <person name="Connor R."/>
            <person name="Conroy D."/>
            <person name="Corby N.R."/>
            <person name="Coville G.J."/>
            <person name="Cox A.V."/>
            <person name="Davis J."/>
            <person name="Dawson E."/>
            <person name="Dhami P.D."/>
            <person name="Dockree C."/>
            <person name="Dodsworth S.J."/>
            <person name="Durbin R.M."/>
            <person name="Ellington A.G."/>
            <person name="Evans K.L."/>
            <person name="Fey J.M."/>
            <person name="Fleming K."/>
            <person name="French L."/>
            <person name="Garner A.A."/>
            <person name="Gilbert J.G.R."/>
            <person name="Goward M.E."/>
            <person name="Grafham D.V."/>
            <person name="Griffiths M.N.D."/>
            <person name="Hall C."/>
            <person name="Hall R.E."/>
            <person name="Hall-Tamlyn G."/>
            <person name="Heathcott R.W."/>
            <person name="Ho S."/>
            <person name="Holmes S."/>
            <person name="Hunt S.E."/>
            <person name="Jones M.C."/>
            <person name="Kershaw J."/>
            <person name="Kimberley A.M."/>
            <person name="King A."/>
            <person name="Laird G.K."/>
            <person name="Langford C.F."/>
            <person name="Leversha M.A."/>
            <person name="Lloyd C."/>
            <person name="Lloyd D.M."/>
            <person name="Martyn I.D."/>
            <person name="Mashreghi-Mohammadi M."/>
            <person name="Matthews L.H."/>
            <person name="Mccann O.T."/>
            <person name="Mcclay J."/>
            <person name="Mclaren S."/>
            <person name="McMurray A.A."/>
            <person name="Milne S.A."/>
            <person name="Mortimore B.J."/>
            <person name="Odell C.N."/>
            <person name="Pavitt R."/>
            <person name="Pearce A.V."/>
            <person name="Pearson D."/>
            <person name="Phillimore B.J.C.T."/>
            <person name="Phillips S.H."/>
            <person name="Plumb R.W."/>
            <person name="Ramsay H."/>
            <person name="Ramsey Y."/>
            <person name="Rogers L."/>
            <person name="Ross M.T."/>
            <person name="Scott C.E."/>
            <person name="Sehra H.K."/>
            <person name="Skuce C.D."/>
            <person name="Smalley S."/>
            <person name="Smith M.L."/>
            <person name="Soderlund C."/>
            <person name="Spragon L."/>
            <person name="Steward C.A."/>
            <person name="Sulston J.E."/>
            <person name="Swann R.M."/>
            <person name="Vaudin M."/>
            <person name="Wall M."/>
            <person name="Wallis J.M."/>
            <person name="Whiteley M.N."/>
            <person name="Willey D.L."/>
            <person name="Williams L."/>
            <person name="Williams S.A."/>
            <person name="Williamson H."/>
            <person name="Wilmer T.E."/>
            <person name="Wilming L."/>
            <person name="Wright C.L."/>
            <person name="Hubbard T."/>
            <person name="Bentley D.R."/>
            <person name="Beck S."/>
            <person name="Rogers J."/>
            <person name="Shimizu N."/>
            <person name="Minoshima S."/>
            <person name="Kawasaki K."/>
            <person name="Sasaki T."/>
            <person name="Asakawa S."/>
            <person name="Kudoh J."/>
            <person name="Shintani A."/>
            <person name="Shibuya K."/>
            <person name="Yoshizaki Y."/>
            <person name="Aoki N."/>
            <person name="Mitsuyama S."/>
            <person name="Roe B.A."/>
            <person name="Chen F."/>
            <person name="Chu L."/>
            <person name="Crabtree J."/>
            <person name="Deschamps S."/>
            <person name="Do A."/>
            <person name="Do T."/>
            <person name="Dorman A."/>
            <person name="Fang F."/>
            <person name="Fu Y."/>
            <person name="Hu P."/>
            <person name="Hua A."/>
            <person name="Kenton S."/>
            <person name="Lai H."/>
            <person name="Lao H.I."/>
            <person name="Lewis J."/>
            <person name="Lewis S."/>
            <person name="Lin S.-P."/>
            <person name="Loh P."/>
            <person name="Malaj E."/>
            <person name="Nguyen T."/>
            <person name="Pan H."/>
            <person name="Phan S."/>
            <person name="Qi S."/>
            <person name="Qian Y."/>
            <person name="Ray L."/>
            <person name="Ren Q."/>
            <person name="Shaull S."/>
            <person name="Sloan D."/>
            <person name="Song L."/>
            <person name="Wang Q."/>
            <person name="Wang Y."/>
            <person name="Wang Z."/>
            <person name="White J."/>
            <person name="Willingham D."/>
            <person name="Wu H."/>
            <person name="Yao Z."/>
            <person name="Zhan M."/>
            <person name="Zhang G."/>
            <person name="Chissoe S."/>
            <person name="Murray J."/>
            <person name="Miller N."/>
            <person name="Minx P."/>
            <person name="Fulton R."/>
            <person name="Johnson D."/>
            <person name="Bemis G."/>
            <person name="Bentley D."/>
            <person name="Bradshaw H."/>
            <person name="Bourne S."/>
            <person name="Cordes M."/>
            <person name="Du Z."/>
            <person name="Fulton L."/>
            <person name="Goela D."/>
            <person name="Graves T."/>
            <person name="Hawkins J."/>
            <person name="Hinds K."/>
            <person name="Kemp K."/>
            <person name="Latreille P."/>
            <person name="Layman D."/>
            <person name="Ozersky P."/>
            <person name="Rohlfing T."/>
            <person name="Scheet P."/>
            <person name="Walker C."/>
            <person name="Wamsley A."/>
            <person name="Wohldmann P."/>
            <person name="Pepin K."/>
            <person name="Nelson J."/>
            <person name="Korf I."/>
            <person name="Bedell J.A."/>
            <person name="Hillier L.W."/>
            <person name="Mardis E."/>
            <person name="Waterston R."/>
            <person name="Wilson R."/>
            <person name="Emanuel B.S."/>
            <person name="Shaikh T."/>
            <person name="Kurahashi H."/>
            <person name="Saitta S."/>
            <person name="Budarf M.L."/>
            <person name="McDermid H.E."/>
            <person name="Johnson A."/>
            <person name="Wong A.C.C."/>
            <person name="Morrow B.E."/>
            <person name="Edelmann L."/>
            <person name="Kim U.J."/>
            <person name="Shizuya H."/>
            <person name="Simon M.I."/>
            <person name="Dumanski J.P."/>
            <person name="Peyrard M."/>
            <person name="Kedra D."/>
            <person name="Seroussi E."/>
            <person name="Fransson I."/>
            <person name="Tapia I."/>
            <person name="Bruder C.E."/>
            <person name="O'Brien K.P."/>
            <person name="Wilkinson P."/>
            <person name="Bodenteich A."/>
            <person name="Hartman K."/>
            <person name="Hu X."/>
            <person name="Khan A.S."/>
            <person name="Lane L."/>
            <person name="Tilahun Y."/>
            <person name="Wright H."/>
        </authorList>
    </citation>
    <scope>NUCLEOTIDE SEQUENCE [LARGE SCALE GENOMIC DNA]</scope>
</reference>
<reference key="7">
    <citation type="journal article" date="2004" name="Genome Res.">
        <title>The status, quality, and expansion of the NIH full-length cDNA project: the Mammalian Gene Collection (MGC).</title>
        <authorList>
            <consortium name="The MGC Project Team"/>
        </authorList>
    </citation>
    <scope>NUCLEOTIDE SEQUENCE [LARGE SCALE MRNA]</scope>
</reference>
<reference key="8">
    <citation type="journal article" date="2005" name="J. Proteome Res.">
        <title>Human plasma N-glycoproteome analysis by immunoaffinity subtraction, hydrazide chemistry, and mass spectrometry.</title>
        <authorList>
            <person name="Liu T."/>
            <person name="Qian W.-J."/>
            <person name="Gritsenko M.A."/>
            <person name="Camp D.G. II"/>
            <person name="Monroe M.E."/>
            <person name="Moore R.J."/>
            <person name="Smith R.D."/>
        </authorList>
    </citation>
    <scope>GLYCOSYLATION [LARGE SCALE ANALYSIS] AT ASN-261</scope>
    <source>
        <tissue>Plasma</tissue>
    </source>
</reference>
<reference key="9">
    <citation type="journal article" date="2014" name="J. Proteomics">
        <title>An enzyme assisted RP-RPLC approach for in-depth analysis of human liver phosphoproteome.</title>
        <authorList>
            <person name="Bian Y."/>
            <person name="Song C."/>
            <person name="Cheng K."/>
            <person name="Dong M."/>
            <person name="Wang F."/>
            <person name="Huang J."/>
            <person name="Sun D."/>
            <person name="Wang L."/>
            <person name="Ye M."/>
            <person name="Zou H."/>
        </authorList>
    </citation>
    <scope>PHOSPHORYLATION [LARGE SCALE ANALYSIS] AT SER-311 AND SER-314</scope>
    <scope>IDENTIFICATION BY MASS SPECTROMETRY [LARGE SCALE ANALYSIS]</scope>
    <source>
        <tissue>Liver</tissue>
    </source>
</reference>
<reference key="10">
    <citation type="journal article" date="2015" name="Cell">
        <title>A single kinase generates the majority of the secreted phosphoproteome.</title>
        <authorList>
            <person name="Tagliabracci V.S."/>
            <person name="Wiley S.E."/>
            <person name="Guo X."/>
            <person name="Kinch L.N."/>
            <person name="Durrant E."/>
            <person name="Wen J."/>
            <person name="Xiao J."/>
            <person name="Cui J."/>
            <person name="Nguyen K.B."/>
            <person name="Engel J.L."/>
            <person name="Coon J.J."/>
            <person name="Grishin N."/>
            <person name="Pinna L.A."/>
            <person name="Pagliarini D.J."/>
            <person name="Dixon J.E."/>
        </authorList>
    </citation>
    <scope>PHOSPHORYLATION AT SER-311 AND SER-314</scope>
</reference>
<reference key="11">
    <citation type="journal article" date="2006" name="Science">
        <title>The consensus coding sequences of human breast and colorectal cancers.</title>
        <authorList>
            <person name="Sjoeblom T."/>
            <person name="Jones S."/>
            <person name="Wood L.D."/>
            <person name="Parsons D.W."/>
            <person name="Lin J."/>
            <person name="Barber T.D."/>
            <person name="Mandelker D."/>
            <person name="Leary R.J."/>
            <person name="Ptak J."/>
            <person name="Silliman N."/>
            <person name="Szabo S."/>
            <person name="Buckhaults P."/>
            <person name="Farrell C."/>
            <person name="Meeh P."/>
            <person name="Markowitz S.D."/>
            <person name="Willis J."/>
            <person name="Dawson D."/>
            <person name="Willson J.K.V."/>
            <person name="Gazdar A.F."/>
            <person name="Hartigan J."/>
            <person name="Wu L."/>
            <person name="Liu C."/>
            <person name="Parmigiani G."/>
            <person name="Park B.H."/>
            <person name="Bachman K.E."/>
            <person name="Papadopoulos N."/>
            <person name="Vogelstein B."/>
            <person name="Kinzler K.W."/>
            <person name="Velculescu V.E."/>
        </authorList>
    </citation>
    <scope>VARIANT [LARGE SCALE ANALYSIS] THR-188</scope>
</reference>
<reference key="12">
    <citation type="journal article" date="2010" name="Hum. Genet.">
        <title>Missense mutations in the APOL1 gene are highly associated with end stage kidney disease risk previously attributed to the MYH9 gene.</title>
        <authorList>
            <person name="Tzur S."/>
            <person name="Rosset S."/>
            <person name="Shemer R."/>
            <person name="Yudkovsky G."/>
            <person name="Selig S."/>
            <person name="Tarekegn A."/>
            <person name="Bekele E."/>
            <person name="Bradman N."/>
            <person name="Wasser W.G."/>
            <person name="Behar D.M."/>
            <person name="Skorecki K."/>
        </authorList>
    </citation>
    <scope>VARIANTS GLY-342 AND MET-384</scope>
    <scope>INVOLVEMENT IN FSGS4</scope>
</reference>
<reference key="13">
    <citation type="journal article" date="2010" name="Science">
        <title>Association of trypanolytic ApoL1 variants with kidney disease in African Americans.</title>
        <authorList>
            <person name="Genovese G."/>
            <person name="Friedman D.J."/>
            <person name="Ross M.D."/>
            <person name="Lecordier L."/>
            <person name="Uzureau P."/>
            <person name="Freedman B.I."/>
            <person name="Bowden D.W."/>
            <person name="Langefeld C.D."/>
            <person name="Oleksyk T.K."/>
            <person name="Uscinski Knob A.L."/>
            <person name="Bernhardy A.J."/>
            <person name="Hicks P.J."/>
            <person name="Nelson G.W."/>
            <person name="Vanhollebeke B."/>
            <person name="Winkler C.A."/>
            <person name="Kopp J.B."/>
            <person name="Pays E."/>
            <person name="Pollak M.R."/>
        </authorList>
    </citation>
    <scope>VARIANTS GLY-342 AND MET-384</scope>
    <scope>INVOLVEMENT IN FSGS4</scope>
</reference>
<feature type="signal peptide" evidence="10">
    <location>
        <begin position="1"/>
        <end position="27"/>
    </location>
</feature>
<feature type="chain" id="PRO_0000002040" description="Apolipoprotein L1">
    <location>
        <begin position="28"/>
        <end position="398"/>
    </location>
</feature>
<feature type="region of interest" description="Disordered" evidence="1">
    <location>
        <begin position="35"/>
        <end position="55"/>
    </location>
</feature>
<feature type="region of interest" description="Disordered" evidence="1">
    <location>
        <begin position="297"/>
        <end position="317"/>
    </location>
</feature>
<feature type="compositionally biased region" description="Polar residues" evidence="1">
    <location>
        <begin position="35"/>
        <end position="47"/>
    </location>
</feature>
<feature type="modified residue" description="Phosphoserine; by FAM20C" evidence="9 14">
    <location>
        <position position="311"/>
    </location>
</feature>
<feature type="modified residue" description="Phosphoserine; by FAM20C" evidence="9 14">
    <location>
        <position position="314"/>
    </location>
</feature>
<feature type="glycosylation site" description="N-linked (GlcNAc...) asparagine" evidence="5">
    <location>
        <position position="261"/>
    </location>
</feature>
<feature type="splice variant" id="VSP_000292" description="In isoform 2." evidence="11">
    <original>M</original>
    <variation>MRFKSHTVELRRPCSDM</variation>
    <location>
        <position position="1"/>
    </location>
</feature>
<feature type="splice variant" id="VSP_045077" description="In isoform 3." evidence="12">
    <location>
        <begin position="16"/>
        <end position="33"/>
    </location>
</feature>
<feature type="sequence variant" id="VAR_011383" description="In dbSNP:rs2239785." evidence="2 4 10">
    <original>E</original>
    <variation>K</variation>
    <location>
        <position position="150"/>
    </location>
</feature>
<feature type="sequence variant" id="VAR_036568" description="In a breast cancer sample; somatic mutation." evidence="6">
    <original>I</original>
    <variation>T</variation>
    <location>
        <position position="188"/>
    </location>
</feature>
<feature type="sequence variant" id="VAR_011384" description="In dbSNP:rs136175." evidence="2 3 4 10">
    <original>M</original>
    <variation>I</variation>
    <location>
        <position position="228"/>
    </location>
</feature>
<feature type="sequence variant" id="VAR_011385" description="In dbSNP:rs136176." evidence="2 3 4 10">
    <original>R</original>
    <variation>K</variation>
    <location>
        <position position="255"/>
    </location>
</feature>
<feature type="sequence variant" id="VAR_046641" description="In dbSNP:rs16996616.">
    <original>D</original>
    <variation>N</variation>
    <location>
        <position position="337"/>
    </location>
</feature>
<feature type="sequence variant" id="VAR_063598" description="Risk factor for FSGS4; when associated in cis with M-384; dbSNP:rs73885319." evidence="3 7 8">
    <original>S</original>
    <variation>G</variation>
    <location>
        <position position="342"/>
    </location>
</feature>
<feature type="sequence variant" id="VAR_061995" description="Risk factor for FSGS4; when associated in cis with G-342; dbSNP:rs60910145." evidence="3 7 8">
    <original>I</original>
    <variation>M</variation>
    <location>
        <position position="384"/>
    </location>
</feature>
<feature type="sequence conflict" description="In Ref. 1; AAG53690 and 2; AAK11591." evidence="13" ref="1 2">
    <original>G</original>
    <variation>R</variation>
    <location>
        <position position="24"/>
    </location>
</feature>
<feature type="sequence conflict" description="In Ref. 3; AAK20210." evidence="13" ref="3">
    <original>E</original>
    <variation>G</variation>
    <location>
        <position position="256"/>
    </location>
</feature>
<feature type="sequence conflict" description="In Ref. 3; AAK20210." evidence="13" ref="3">
    <original>V</original>
    <variation>A</variation>
    <location>
        <position position="346"/>
    </location>
</feature>
<feature type="helix" evidence="16">
    <location>
        <begin position="67"/>
        <end position="75"/>
    </location>
</feature>
<feature type="helix" evidence="16">
    <location>
        <begin position="81"/>
        <end position="89"/>
    </location>
</feature>
<feature type="helix" evidence="16">
    <location>
        <begin position="91"/>
        <end position="100"/>
    </location>
</feature>
<feature type="helix" evidence="16">
    <location>
        <begin position="105"/>
        <end position="125"/>
    </location>
</feature>
<feature type="helix" evidence="16">
    <location>
        <begin position="127"/>
        <end position="129"/>
    </location>
</feature>
<feature type="strand" evidence="15">
    <location>
        <begin position="130"/>
        <end position="132"/>
    </location>
</feature>
<feature type="helix" evidence="16">
    <location>
        <begin position="134"/>
        <end position="158"/>
    </location>
</feature>
<feature type="helix" evidence="16">
    <location>
        <begin position="162"/>
        <end position="167"/>
    </location>
</feature>
<keyword id="KW-0002">3D-structure</keyword>
<keyword id="KW-0025">Alternative splicing</keyword>
<keyword id="KW-0153">Cholesterol metabolism</keyword>
<keyword id="KW-0903">Direct protein sequencing</keyword>
<keyword id="KW-0225">Disease variant</keyword>
<keyword id="KW-0325">Glycoprotein</keyword>
<keyword id="KW-0345">HDL</keyword>
<keyword id="KW-0443">Lipid metabolism</keyword>
<keyword id="KW-0445">Lipid transport</keyword>
<keyword id="KW-0597">Phosphoprotein</keyword>
<keyword id="KW-1267">Proteomics identification</keyword>
<keyword id="KW-1185">Reference proteome</keyword>
<keyword id="KW-0964">Secreted</keyword>
<keyword id="KW-0732">Signal</keyword>
<keyword id="KW-0753">Steroid metabolism</keyword>
<keyword id="KW-1207">Sterol metabolism</keyword>
<keyword id="KW-0813">Transport</keyword>
<protein>
    <recommendedName>
        <fullName>Apolipoprotein L1</fullName>
    </recommendedName>
    <alternativeName>
        <fullName>Apolipoprotein L</fullName>
        <shortName>Apo-L</shortName>
        <shortName>ApoL</shortName>
    </alternativeName>
    <alternativeName>
        <fullName>Apolipoprotein L-I</fullName>
        <shortName>ApoL-I</shortName>
    </alternativeName>
</protein>
<accession>O14791</accession>
<accession>A5PLQ4</accession>
<accession>B4DU12</accession>
<accession>E9PF24</accession>
<accession>O60804</accession>
<accession>Q5R3P7</accession>
<accession>Q5R3P8</accession>
<accession>Q96AB8</accession>
<accession>Q96PM4</accession>
<accession>Q9BQ03</accession>
<gene>
    <name type="primary">APOL1</name>
    <name type="synonym">APOL</name>
</gene>
<evidence type="ECO:0000256" key="1">
    <source>
        <dbReference type="SAM" id="MobiDB-lite"/>
    </source>
</evidence>
<evidence type="ECO:0000269" key="2">
    <source>
    </source>
</evidence>
<evidence type="ECO:0000269" key="3">
    <source>
    </source>
</evidence>
<evidence type="ECO:0000269" key="4">
    <source>
    </source>
</evidence>
<evidence type="ECO:0000269" key="5">
    <source>
    </source>
</evidence>
<evidence type="ECO:0000269" key="6">
    <source>
    </source>
</evidence>
<evidence type="ECO:0000269" key="7">
    <source>
    </source>
</evidence>
<evidence type="ECO:0000269" key="8">
    <source>
    </source>
</evidence>
<evidence type="ECO:0000269" key="9">
    <source>
    </source>
</evidence>
<evidence type="ECO:0000269" key="10">
    <source>
    </source>
</evidence>
<evidence type="ECO:0000303" key="11">
    <source>
    </source>
</evidence>
<evidence type="ECO:0000303" key="12">
    <source>
    </source>
</evidence>
<evidence type="ECO:0000305" key="13"/>
<evidence type="ECO:0007744" key="14">
    <source>
    </source>
</evidence>
<evidence type="ECO:0007829" key="15">
    <source>
        <dbReference type="PDB" id="7L6K"/>
    </source>
</evidence>
<evidence type="ECO:0007829" key="16">
    <source>
        <dbReference type="PDB" id="7LFA"/>
    </source>
</evidence>
<comment type="function">
    <text>May play a role in lipid exchange and transport throughout the body. May participate in reverse cholesterol transport from peripheral cells to the liver.</text>
</comment>
<comment type="subunit">
    <text>In plasma, interacts with APOA1 and mainly associated with large high density lipoprotein particles.</text>
</comment>
<comment type="interaction">
    <interactant intactId="EBI-1221934">
        <id>O14791</id>
    </interactant>
    <interactant intactId="EBI-396137">
        <id>Q9UJX2</id>
        <label>CDC23</label>
    </interactant>
    <organismsDiffer>false</organismsDiffer>
    <experiments>3</experiments>
</comment>
<comment type="interaction">
    <interactant intactId="EBI-1221934">
        <id>O14791</id>
    </interactant>
    <interactant intactId="EBI-7147442">
        <id>Q8IXL6</id>
        <label>FAM20C</label>
    </interactant>
    <organismsDiffer>false</organismsDiffer>
    <experiments>2</experiments>
</comment>
<comment type="subcellular location">
    <subcellularLocation>
        <location>Secreted</location>
    </subcellularLocation>
</comment>
<comment type="alternative products">
    <event type="alternative splicing"/>
    <isoform>
        <id>O14791-1</id>
        <name>1</name>
        <name>A</name>
        <sequence type="displayed"/>
    </isoform>
    <isoform>
        <id>O14791-2</id>
        <name>2</name>
        <name>B</name>
        <sequence type="described" ref="VSP_000292"/>
    </isoform>
    <isoform>
        <id>O14791-3</id>
        <name>3</name>
        <sequence type="described" ref="VSP_045077"/>
    </isoform>
</comment>
<comment type="tissue specificity">
    <text>Plasma. Found on APOA-I-containing high density lipoprotein (HDL3). Expressed in pancreas, lung, prostate, liver, placenta and spleen.</text>
</comment>
<comment type="PTM">
    <text evidence="9">Phosphorylated by FAM20C in the extracellular medium.</text>
</comment>
<comment type="disease" evidence="7 8">
    <disease id="DI-02864">
        <name>Focal segmental glomerulosclerosis 4</name>
        <acronym>FSGS4</acronym>
        <description>A renal pathology defined by the presence of segmental sclerosis in glomeruli and resulting in proteinuria, reduced glomerular filtration rate and progressive decline in renal function. Renal insufficiency often progresses to end-stage renal disease, a highly morbid state requiring either dialysis therapy or kidney transplantation.</description>
        <dbReference type="MIM" id="612551"/>
    </disease>
    <text>Disease susceptibility is associated with variants affecting the gene represented in this entry.</text>
</comment>
<comment type="miscellaneous">
    <molecule>Isoform 1</molecule>
    <text>Major isoform.</text>
</comment>
<comment type="similarity">
    <text evidence="13">Belongs to the apolipoprotein L family.</text>
</comment>
<comment type="sequence caution" evidence="13">
    <conflict type="erroneous initiation">
        <sequence resource="EMBL-CDS" id="AAB81218"/>
    </conflict>
</comment>
<name>APOL1_HUMAN</name>
<organism>
    <name type="scientific">Homo sapiens</name>
    <name type="common">Human</name>
    <dbReference type="NCBI Taxonomy" id="9606"/>
    <lineage>
        <taxon>Eukaryota</taxon>
        <taxon>Metazoa</taxon>
        <taxon>Chordata</taxon>
        <taxon>Craniata</taxon>
        <taxon>Vertebrata</taxon>
        <taxon>Euteleostomi</taxon>
        <taxon>Mammalia</taxon>
        <taxon>Eutheria</taxon>
        <taxon>Euarchontoglires</taxon>
        <taxon>Primates</taxon>
        <taxon>Haplorrhini</taxon>
        <taxon>Catarrhini</taxon>
        <taxon>Hominidae</taxon>
        <taxon>Homo</taxon>
    </lineage>
</organism>